<comment type="function">
    <text evidence="1">NDH-1 shuttles electrons from NADH, via FMN and iron-sulfur (Fe-S) centers, to quinones in the respiratory chain. The immediate electron acceptor for the enzyme in this species is believed to be ubiquinone. Couples the redox reaction to proton translocation (for every two electrons transferred, four hydrogen ions are translocated across the cytoplasmic membrane), and thus conserves the redox energy in a proton gradient.</text>
</comment>
<comment type="catalytic activity">
    <reaction evidence="1">
        <text>a quinone + NADH + 5 H(+)(in) = a quinol + NAD(+) + 4 H(+)(out)</text>
        <dbReference type="Rhea" id="RHEA:57888"/>
        <dbReference type="ChEBI" id="CHEBI:15378"/>
        <dbReference type="ChEBI" id="CHEBI:24646"/>
        <dbReference type="ChEBI" id="CHEBI:57540"/>
        <dbReference type="ChEBI" id="CHEBI:57945"/>
        <dbReference type="ChEBI" id="CHEBI:132124"/>
    </reaction>
</comment>
<comment type="cofactor">
    <cofactor evidence="1">
        <name>[4Fe-4S] cluster</name>
        <dbReference type="ChEBI" id="CHEBI:49883"/>
    </cofactor>
    <text evidence="1">Binds 2 [4Fe-4S] clusters per subunit.</text>
</comment>
<comment type="subunit">
    <text evidence="1">NDH-1 is composed of 14 different subunits. Subunits NuoA, H, J, K, L, M, N constitute the membrane sector of the complex.</text>
</comment>
<comment type="subcellular location">
    <subcellularLocation>
        <location evidence="1">Cell inner membrane</location>
        <topology evidence="1">Peripheral membrane protein</topology>
    </subcellularLocation>
</comment>
<comment type="similarity">
    <text evidence="1">Belongs to the complex I 23 kDa subunit family.</text>
</comment>
<protein>
    <recommendedName>
        <fullName evidence="1">NADH-quinone oxidoreductase subunit I</fullName>
        <ecNumber evidence="1">7.1.1.-</ecNumber>
    </recommendedName>
    <alternativeName>
        <fullName evidence="1">NADH dehydrogenase I subunit I</fullName>
    </alternativeName>
    <alternativeName>
        <fullName evidence="1">NDH-1 subunit I</fullName>
    </alternativeName>
</protein>
<organism>
    <name type="scientific">Bordetella bronchiseptica (strain ATCC BAA-588 / NCTC 13252 / RB50)</name>
    <name type="common">Alcaligenes bronchisepticus</name>
    <dbReference type="NCBI Taxonomy" id="257310"/>
    <lineage>
        <taxon>Bacteria</taxon>
        <taxon>Pseudomonadati</taxon>
        <taxon>Pseudomonadota</taxon>
        <taxon>Betaproteobacteria</taxon>
        <taxon>Burkholderiales</taxon>
        <taxon>Alcaligenaceae</taxon>
        <taxon>Bordetella</taxon>
    </lineage>
</organism>
<name>NUOI_BORBR</name>
<proteinExistence type="inferred from homology"/>
<evidence type="ECO:0000255" key="1">
    <source>
        <dbReference type="HAMAP-Rule" id="MF_01351"/>
    </source>
</evidence>
<reference key="1">
    <citation type="journal article" date="2003" name="Nat. Genet.">
        <title>Comparative analysis of the genome sequences of Bordetella pertussis, Bordetella parapertussis and Bordetella bronchiseptica.</title>
        <authorList>
            <person name="Parkhill J."/>
            <person name="Sebaihia M."/>
            <person name="Preston A."/>
            <person name="Murphy L.D."/>
            <person name="Thomson N.R."/>
            <person name="Harris D.E."/>
            <person name="Holden M.T.G."/>
            <person name="Churcher C.M."/>
            <person name="Bentley S.D."/>
            <person name="Mungall K.L."/>
            <person name="Cerdeno-Tarraga A.-M."/>
            <person name="Temple L."/>
            <person name="James K.D."/>
            <person name="Harris B."/>
            <person name="Quail M.A."/>
            <person name="Achtman M."/>
            <person name="Atkin R."/>
            <person name="Baker S."/>
            <person name="Basham D."/>
            <person name="Bason N."/>
            <person name="Cherevach I."/>
            <person name="Chillingworth T."/>
            <person name="Collins M."/>
            <person name="Cronin A."/>
            <person name="Davis P."/>
            <person name="Doggett J."/>
            <person name="Feltwell T."/>
            <person name="Goble A."/>
            <person name="Hamlin N."/>
            <person name="Hauser H."/>
            <person name="Holroyd S."/>
            <person name="Jagels K."/>
            <person name="Leather S."/>
            <person name="Moule S."/>
            <person name="Norberczak H."/>
            <person name="O'Neil S."/>
            <person name="Ormond D."/>
            <person name="Price C."/>
            <person name="Rabbinowitsch E."/>
            <person name="Rutter S."/>
            <person name="Sanders M."/>
            <person name="Saunders D."/>
            <person name="Seeger K."/>
            <person name="Sharp S."/>
            <person name="Simmonds M."/>
            <person name="Skelton J."/>
            <person name="Squares R."/>
            <person name="Squares S."/>
            <person name="Stevens K."/>
            <person name="Unwin L."/>
            <person name="Whitehead S."/>
            <person name="Barrell B.G."/>
            <person name="Maskell D.J."/>
        </authorList>
    </citation>
    <scope>NUCLEOTIDE SEQUENCE [LARGE SCALE GENOMIC DNA]</scope>
    <source>
        <strain>ATCC BAA-588 / NCTC 13252 / RB50</strain>
    </source>
</reference>
<gene>
    <name evidence="1" type="primary">nuoI</name>
    <name type="ordered locus">BB3833</name>
</gene>
<accession>Q7WCU7</accession>
<dbReference type="EC" id="7.1.1.-" evidence="1"/>
<dbReference type="EMBL" id="BX640448">
    <property type="protein sequence ID" value="CAE35807.1"/>
    <property type="molecule type" value="Genomic_DNA"/>
</dbReference>
<dbReference type="RefSeq" id="WP_003813924.1">
    <property type="nucleotide sequence ID" value="NC_002927.3"/>
</dbReference>
<dbReference type="SMR" id="Q7WCU7"/>
<dbReference type="GeneID" id="93205166"/>
<dbReference type="KEGG" id="bbr:BB3833"/>
<dbReference type="eggNOG" id="COG1143">
    <property type="taxonomic scope" value="Bacteria"/>
</dbReference>
<dbReference type="HOGENOM" id="CLU_067218_5_1_4"/>
<dbReference type="Proteomes" id="UP000001027">
    <property type="component" value="Chromosome"/>
</dbReference>
<dbReference type="GO" id="GO:0005886">
    <property type="term" value="C:plasma membrane"/>
    <property type="evidence" value="ECO:0007669"/>
    <property type="project" value="UniProtKB-SubCell"/>
</dbReference>
<dbReference type="GO" id="GO:0051539">
    <property type="term" value="F:4 iron, 4 sulfur cluster binding"/>
    <property type="evidence" value="ECO:0007669"/>
    <property type="project" value="UniProtKB-KW"/>
</dbReference>
<dbReference type="GO" id="GO:0005506">
    <property type="term" value="F:iron ion binding"/>
    <property type="evidence" value="ECO:0007669"/>
    <property type="project" value="UniProtKB-UniRule"/>
</dbReference>
<dbReference type="GO" id="GO:0050136">
    <property type="term" value="F:NADH:ubiquinone reductase (non-electrogenic) activity"/>
    <property type="evidence" value="ECO:0007669"/>
    <property type="project" value="UniProtKB-UniRule"/>
</dbReference>
<dbReference type="GO" id="GO:0048038">
    <property type="term" value="F:quinone binding"/>
    <property type="evidence" value="ECO:0007669"/>
    <property type="project" value="UniProtKB-KW"/>
</dbReference>
<dbReference type="GO" id="GO:0009060">
    <property type="term" value="P:aerobic respiration"/>
    <property type="evidence" value="ECO:0007669"/>
    <property type="project" value="TreeGrafter"/>
</dbReference>
<dbReference type="FunFam" id="3.30.70.3270:FF:000003">
    <property type="entry name" value="NADH-quinone oxidoreductase subunit I"/>
    <property type="match status" value="1"/>
</dbReference>
<dbReference type="Gene3D" id="3.30.70.3270">
    <property type="match status" value="1"/>
</dbReference>
<dbReference type="HAMAP" id="MF_01351">
    <property type="entry name" value="NDH1_NuoI"/>
    <property type="match status" value="1"/>
</dbReference>
<dbReference type="InterPro" id="IPR017896">
    <property type="entry name" value="4Fe4S_Fe-S-bd"/>
</dbReference>
<dbReference type="InterPro" id="IPR017900">
    <property type="entry name" value="4Fe4S_Fe_S_CS"/>
</dbReference>
<dbReference type="InterPro" id="IPR010226">
    <property type="entry name" value="NADH_quinone_OxRdtase_chainI"/>
</dbReference>
<dbReference type="NCBIfam" id="TIGR01971">
    <property type="entry name" value="NuoI"/>
    <property type="match status" value="1"/>
</dbReference>
<dbReference type="NCBIfam" id="NF004538">
    <property type="entry name" value="PRK05888.1-4"/>
    <property type="match status" value="1"/>
</dbReference>
<dbReference type="NCBIfam" id="NF004539">
    <property type="entry name" value="PRK05888.1-5"/>
    <property type="match status" value="1"/>
</dbReference>
<dbReference type="PANTHER" id="PTHR10849:SF20">
    <property type="entry name" value="NADH DEHYDROGENASE [UBIQUINONE] IRON-SULFUR PROTEIN 8, MITOCHONDRIAL"/>
    <property type="match status" value="1"/>
</dbReference>
<dbReference type="PANTHER" id="PTHR10849">
    <property type="entry name" value="NADH DEHYDROGENASE UBIQUINONE IRON-SULFUR PROTEIN 8, MITOCHONDRIAL"/>
    <property type="match status" value="1"/>
</dbReference>
<dbReference type="Pfam" id="PF12838">
    <property type="entry name" value="Fer4_7"/>
    <property type="match status" value="1"/>
</dbReference>
<dbReference type="SUPFAM" id="SSF54862">
    <property type="entry name" value="4Fe-4S ferredoxins"/>
    <property type="match status" value="1"/>
</dbReference>
<dbReference type="PROSITE" id="PS00198">
    <property type="entry name" value="4FE4S_FER_1"/>
    <property type="match status" value="2"/>
</dbReference>
<dbReference type="PROSITE" id="PS51379">
    <property type="entry name" value="4FE4S_FER_2"/>
    <property type="match status" value="2"/>
</dbReference>
<sequence length="162" mass="18834">MEAIKDFFGSLLLTELFKGLRLTGKYFFKRKVTLRYPMEKTPTSARFRGLHALRRYPNGEERCIACKLCEAVCPALAITIESEQRDDGTRRTTRYDIDLTKCIFCGFCEESCPVDSIVETHIHEYHGEKRGDLYFTKDMLLAVGDRYEAEIARRRAEDAPYR</sequence>
<keyword id="KW-0004">4Fe-4S</keyword>
<keyword id="KW-0997">Cell inner membrane</keyword>
<keyword id="KW-1003">Cell membrane</keyword>
<keyword id="KW-0408">Iron</keyword>
<keyword id="KW-0411">Iron-sulfur</keyword>
<keyword id="KW-0472">Membrane</keyword>
<keyword id="KW-0479">Metal-binding</keyword>
<keyword id="KW-0520">NAD</keyword>
<keyword id="KW-0874">Quinone</keyword>
<keyword id="KW-0677">Repeat</keyword>
<keyword id="KW-1278">Translocase</keyword>
<keyword id="KW-0830">Ubiquinone</keyword>
<feature type="chain" id="PRO_0000250880" description="NADH-quinone oxidoreductase subunit I">
    <location>
        <begin position="1"/>
        <end position="162"/>
    </location>
</feature>
<feature type="domain" description="4Fe-4S ferredoxin-type 1" evidence="1">
    <location>
        <begin position="53"/>
        <end position="83"/>
    </location>
</feature>
<feature type="domain" description="4Fe-4S ferredoxin-type 2" evidence="1">
    <location>
        <begin position="93"/>
        <end position="122"/>
    </location>
</feature>
<feature type="binding site" evidence="1">
    <location>
        <position position="63"/>
    </location>
    <ligand>
        <name>[4Fe-4S] cluster</name>
        <dbReference type="ChEBI" id="CHEBI:49883"/>
        <label>1</label>
    </ligand>
</feature>
<feature type="binding site" evidence="1">
    <location>
        <position position="66"/>
    </location>
    <ligand>
        <name>[4Fe-4S] cluster</name>
        <dbReference type="ChEBI" id="CHEBI:49883"/>
        <label>1</label>
    </ligand>
</feature>
<feature type="binding site" evidence="1">
    <location>
        <position position="69"/>
    </location>
    <ligand>
        <name>[4Fe-4S] cluster</name>
        <dbReference type="ChEBI" id="CHEBI:49883"/>
        <label>1</label>
    </ligand>
</feature>
<feature type="binding site" evidence="1">
    <location>
        <position position="73"/>
    </location>
    <ligand>
        <name>[4Fe-4S] cluster</name>
        <dbReference type="ChEBI" id="CHEBI:49883"/>
        <label>2</label>
    </ligand>
</feature>
<feature type="binding site" evidence="1">
    <location>
        <position position="102"/>
    </location>
    <ligand>
        <name>[4Fe-4S] cluster</name>
        <dbReference type="ChEBI" id="CHEBI:49883"/>
        <label>2</label>
    </ligand>
</feature>
<feature type="binding site" evidence="1">
    <location>
        <position position="105"/>
    </location>
    <ligand>
        <name>[4Fe-4S] cluster</name>
        <dbReference type="ChEBI" id="CHEBI:49883"/>
        <label>2</label>
    </ligand>
</feature>
<feature type="binding site" evidence="1">
    <location>
        <position position="108"/>
    </location>
    <ligand>
        <name>[4Fe-4S] cluster</name>
        <dbReference type="ChEBI" id="CHEBI:49883"/>
        <label>2</label>
    </ligand>
</feature>
<feature type="binding site" evidence="1">
    <location>
        <position position="112"/>
    </location>
    <ligand>
        <name>[4Fe-4S] cluster</name>
        <dbReference type="ChEBI" id="CHEBI:49883"/>
        <label>1</label>
    </ligand>
</feature>